<feature type="chain" id="PRO_0000115405" description="Small ribosomal subunit protein uS15">
    <location>
        <begin position="1"/>
        <end position="89"/>
    </location>
</feature>
<gene>
    <name evidence="1" type="primary">rpsO</name>
    <name type="ordered locus">BMA1835</name>
</gene>
<dbReference type="EMBL" id="CP000010">
    <property type="protein sequence ID" value="AAU49846.1"/>
    <property type="molecule type" value="Genomic_DNA"/>
</dbReference>
<dbReference type="RefSeq" id="WP_004185828.1">
    <property type="nucleotide sequence ID" value="NC_006348.1"/>
</dbReference>
<dbReference type="RefSeq" id="YP_103439.1">
    <property type="nucleotide sequence ID" value="NC_006348.1"/>
</dbReference>
<dbReference type="SMR" id="Q62IN0"/>
<dbReference type="GeneID" id="93059688"/>
<dbReference type="KEGG" id="bma:BMA1835"/>
<dbReference type="PATRIC" id="fig|243160.12.peg.1872"/>
<dbReference type="eggNOG" id="COG0184">
    <property type="taxonomic scope" value="Bacteria"/>
</dbReference>
<dbReference type="HOGENOM" id="CLU_148518_0_0_4"/>
<dbReference type="Proteomes" id="UP000006693">
    <property type="component" value="Chromosome 1"/>
</dbReference>
<dbReference type="GO" id="GO:0022627">
    <property type="term" value="C:cytosolic small ribosomal subunit"/>
    <property type="evidence" value="ECO:0007669"/>
    <property type="project" value="TreeGrafter"/>
</dbReference>
<dbReference type="GO" id="GO:0019843">
    <property type="term" value="F:rRNA binding"/>
    <property type="evidence" value="ECO:0007669"/>
    <property type="project" value="UniProtKB-UniRule"/>
</dbReference>
<dbReference type="GO" id="GO:0003735">
    <property type="term" value="F:structural constituent of ribosome"/>
    <property type="evidence" value="ECO:0007669"/>
    <property type="project" value="InterPro"/>
</dbReference>
<dbReference type="GO" id="GO:0006412">
    <property type="term" value="P:translation"/>
    <property type="evidence" value="ECO:0007669"/>
    <property type="project" value="UniProtKB-UniRule"/>
</dbReference>
<dbReference type="CDD" id="cd00353">
    <property type="entry name" value="Ribosomal_S15p_S13e"/>
    <property type="match status" value="1"/>
</dbReference>
<dbReference type="FunFam" id="1.10.287.10:FF:000002">
    <property type="entry name" value="30S ribosomal protein S15"/>
    <property type="match status" value="1"/>
</dbReference>
<dbReference type="Gene3D" id="6.10.250.3130">
    <property type="match status" value="1"/>
</dbReference>
<dbReference type="Gene3D" id="1.10.287.10">
    <property type="entry name" value="S15/NS1, RNA-binding"/>
    <property type="match status" value="1"/>
</dbReference>
<dbReference type="HAMAP" id="MF_01343_B">
    <property type="entry name" value="Ribosomal_uS15_B"/>
    <property type="match status" value="1"/>
</dbReference>
<dbReference type="InterPro" id="IPR000589">
    <property type="entry name" value="Ribosomal_uS15"/>
</dbReference>
<dbReference type="InterPro" id="IPR005290">
    <property type="entry name" value="Ribosomal_uS15_bac-type"/>
</dbReference>
<dbReference type="InterPro" id="IPR009068">
    <property type="entry name" value="uS15_NS1_RNA-bd_sf"/>
</dbReference>
<dbReference type="NCBIfam" id="TIGR00952">
    <property type="entry name" value="S15_bact"/>
    <property type="match status" value="1"/>
</dbReference>
<dbReference type="PANTHER" id="PTHR23321">
    <property type="entry name" value="RIBOSOMAL PROTEIN S15, BACTERIAL AND ORGANELLAR"/>
    <property type="match status" value="1"/>
</dbReference>
<dbReference type="PANTHER" id="PTHR23321:SF26">
    <property type="entry name" value="SMALL RIBOSOMAL SUBUNIT PROTEIN US15M"/>
    <property type="match status" value="1"/>
</dbReference>
<dbReference type="Pfam" id="PF00312">
    <property type="entry name" value="Ribosomal_S15"/>
    <property type="match status" value="1"/>
</dbReference>
<dbReference type="SMART" id="SM01387">
    <property type="entry name" value="Ribosomal_S15"/>
    <property type="match status" value="1"/>
</dbReference>
<dbReference type="SUPFAM" id="SSF47060">
    <property type="entry name" value="S15/NS1 RNA-binding domain"/>
    <property type="match status" value="1"/>
</dbReference>
<dbReference type="PROSITE" id="PS00362">
    <property type="entry name" value="RIBOSOMAL_S15"/>
    <property type="match status" value="1"/>
</dbReference>
<proteinExistence type="inferred from homology"/>
<name>RS15_BURMA</name>
<sequence>MSVADIKKSEVVAQFARGANDTGSPEVQVALLTARITELTGHFKTHAKDHHSRRGLLRMVSRRRKLLDYLKGKDADRYRALIEKLGLRK</sequence>
<comment type="function">
    <text evidence="1">One of the primary rRNA binding proteins, it binds directly to 16S rRNA where it helps nucleate assembly of the platform of the 30S subunit by binding and bridging several RNA helices of the 16S rRNA.</text>
</comment>
<comment type="function">
    <text evidence="1">Forms an intersubunit bridge (bridge B4) with the 23S rRNA of the 50S subunit in the ribosome.</text>
</comment>
<comment type="subunit">
    <text evidence="1">Part of the 30S ribosomal subunit. Forms a bridge to the 50S subunit in the 70S ribosome, contacting the 23S rRNA.</text>
</comment>
<comment type="similarity">
    <text evidence="1">Belongs to the universal ribosomal protein uS15 family.</text>
</comment>
<evidence type="ECO:0000255" key="1">
    <source>
        <dbReference type="HAMAP-Rule" id="MF_01343"/>
    </source>
</evidence>
<evidence type="ECO:0000305" key="2"/>
<keyword id="KW-1185">Reference proteome</keyword>
<keyword id="KW-0687">Ribonucleoprotein</keyword>
<keyword id="KW-0689">Ribosomal protein</keyword>
<keyword id="KW-0694">RNA-binding</keyword>
<keyword id="KW-0699">rRNA-binding</keyword>
<accession>Q62IN0</accession>
<organism>
    <name type="scientific">Burkholderia mallei (strain ATCC 23344)</name>
    <dbReference type="NCBI Taxonomy" id="243160"/>
    <lineage>
        <taxon>Bacteria</taxon>
        <taxon>Pseudomonadati</taxon>
        <taxon>Pseudomonadota</taxon>
        <taxon>Betaproteobacteria</taxon>
        <taxon>Burkholderiales</taxon>
        <taxon>Burkholderiaceae</taxon>
        <taxon>Burkholderia</taxon>
        <taxon>pseudomallei group</taxon>
    </lineage>
</organism>
<protein>
    <recommendedName>
        <fullName evidence="1">Small ribosomal subunit protein uS15</fullName>
    </recommendedName>
    <alternativeName>
        <fullName evidence="2">30S ribosomal protein S15</fullName>
    </alternativeName>
</protein>
<reference key="1">
    <citation type="journal article" date="2004" name="Proc. Natl. Acad. Sci. U.S.A.">
        <title>Structural flexibility in the Burkholderia mallei genome.</title>
        <authorList>
            <person name="Nierman W.C."/>
            <person name="DeShazer D."/>
            <person name="Kim H.S."/>
            <person name="Tettelin H."/>
            <person name="Nelson K.E."/>
            <person name="Feldblyum T.V."/>
            <person name="Ulrich R.L."/>
            <person name="Ronning C.M."/>
            <person name="Brinkac L.M."/>
            <person name="Daugherty S.C."/>
            <person name="Davidsen T.D."/>
            <person name="DeBoy R.T."/>
            <person name="Dimitrov G."/>
            <person name="Dodson R.J."/>
            <person name="Durkin A.S."/>
            <person name="Gwinn M.L."/>
            <person name="Haft D.H."/>
            <person name="Khouri H.M."/>
            <person name="Kolonay J.F."/>
            <person name="Madupu R."/>
            <person name="Mohammoud Y."/>
            <person name="Nelson W.C."/>
            <person name="Radune D."/>
            <person name="Romero C.M."/>
            <person name="Sarria S."/>
            <person name="Selengut J."/>
            <person name="Shamblin C."/>
            <person name="Sullivan S.A."/>
            <person name="White O."/>
            <person name="Yu Y."/>
            <person name="Zafar N."/>
            <person name="Zhou L."/>
            <person name="Fraser C.M."/>
        </authorList>
    </citation>
    <scope>NUCLEOTIDE SEQUENCE [LARGE SCALE GENOMIC DNA]</scope>
    <source>
        <strain>ATCC 23344</strain>
    </source>
</reference>